<name>KUP1_CUPNH</name>
<protein>
    <recommendedName>
        <fullName evidence="1">Probable potassium transport system protein Kup 1</fullName>
    </recommendedName>
</protein>
<reference key="1">
    <citation type="journal article" date="2006" name="Nat. Biotechnol.">
        <title>Genome sequence of the bioplastic-producing 'Knallgas' bacterium Ralstonia eutropha H16.</title>
        <authorList>
            <person name="Pohlmann A."/>
            <person name="Fricke W.F."/>
            <person name="Reinecke F."/>
            <person name="Kusian B."/>
            <person name="Liesegang H."/>
            <person name="Cramm R."/>
            <person name="Eitinger T."/>
            <person name="Ewering C."/>
            <person name="Poetter M."/>
            <person name="Schwartz E."/>
            <person name="Strittmatter A."/>
            <person name="Voss I."/>
            <person name="Gottschalk G."/>
            <person name="Steinbuechel A."/>
            <person name="Friedrich B."/>
            <person name="Bowien B."/>
        </authorList>
    </citation>
    <scope>NUCLEOTIDE SEQUENCE [LARGE SCALE GENOMIC DNA]</scope>
    <source>
        <strain>ATCC 17699 / DSM 428 / KCTC 22496 / NCIMB 10442 / H16 / Stanier 337</strain>
    </source>
</reference>
<accession>Q0KBR7</accession>
<comment type="function">
    <text evidence="1">Transport of potassium into the cell. Likely operates as a K(+):H(+) symporter.</text>
</comment>
<comment type="catalytic activity">
    <reaction evidence="1">
        <text>K(+)(in) + H(+)(in) = K(+)(out) + H(+)(out)</text>
        <dbReference type="Rhea" id="RHEA:28490"/>
        <dbReference type="ChEBI" id="CHEBI:15378"/>
        <dbReference type="ChEBI" id="CHEBI:29103"/>
    </reaction>
    <physiologicalReaction direction="right-to-left" evidence="1">
        <dbReference type="Rhea" id="RHEA:28492"/>
    </physiologicalReaction>
</comment>
<comment type="subcellular location">
    <subcellularLocation>
        <location evidence="1">Cell inner membrane</location>
        <topology evidence="1">Multi-pass membrane protein</topology>
    </subcellularLocation>
</comment>
<comment type="similarity">
    <text evidence="1">Belongs to the HAK/KUP transporter (TC 2.A.72) family.</text>
</comment>
<evidence type="ECO:0000255" key="1">
    <source>
        <dbReference type="HAMAP-Rule" id="MF_01522"/>
    </source>
</evidence>
<dbReference type="EMBL" id="AM260479">
    <property type="protein sequence ID" value="CAJ92554.1"/>
    <property type="molecule type" value="Genomic_DNA"/>
</dbReference>
<dbReference type="RefSeq" id="WP_011615071.1">
    <property type="nucleotide sequence ID" value="NC_008313.1"/>
</dbReference>
<dbReference type="STRING" id="381666.H16_A1419"/>
<dbReference type="KEGG" id="reh:H16_A1419"/>
<dbReference type="PATRIC" id="fig|381666.6.peg.1807"/>
<dbReference type="eggNOG" id="COG3158">
    <property type="taxonomic scope" value="Bacteria"/>
</dbReference>
<dbReference type="HOGENOM" id="CLU_008142_4_2_4"/>
<dbReference type="OrthoDB" id="9805577at2"/>
<dbReference type="Proteomes" id="UP000008210">
    <property type="component" value="Chromosome 1"/>
</dbReference>
<dbReference type="GO" id="GO:0005886">
    <property type="term" value="C:plasma membrane"/>
    <property type="evidence" value="ECO:0007669"/>
    <property type="project" value="UniProtKB-SubCell"/>
</dbReference>
<dbReference type="GO" id="GO:0015079">
    <property type="term" value="F:potassium ion transmembrane transporter activity"/>
    <property type="evidence" value="ECO:0007669"/>
    <property type="project" value="UniProtKB-UniRule"/>
</dbReference>
<dbReference type="GO" id="GO:0015293">
    <property type="term" value="F:symporter activity"/>
    <property type="evidence" value="ECO:0007669"/>
    <property type="project" value="UniProtKB-UniRule"/>
</dbReference>
<dbReference type="HAMAP" id="MF_01522">
    <property type="entry name" value="Kup"/>
    <property type="match status" value="1"/>
</dbReference>
<dbReference type="InterPro" id="IPR003855">
    <property type="entry name" value="K+_transporter"/>
</dbReference>
<dbReference type="InterPro" id="IPR053952">
    <property type="entry name" value="K_trans_C"/>
</dbReference>
<dbReference type="InterPro" id="IPR053951">
    <property type="entry name" value="K_trans_N"/>
</dbReference>
<dbReference type="InterPro" id="IPR023051">
    <property type="entry name" value="Kup"/>
</dbReference>
<dbReference type="PANTHER" id="PTHR30540:SF79">
    <property type="entry name" value="LOW AFFINITY POTASSIUM TRANSPORT SYSTEM PROTEIN KUP"/>
    <property type="match status" value="1"/>
</dbReference>
<dbReference type="PANTHER" id="PTHR30540">
    <property type="entry name" value="OSMOTIC STRESS POTASSIUM TRANSPORTER"/>
    <property type="match status" value="1"/>
</dbReference>
<dbReference type="Pfam" id="PF02705">
    <property type="entry name" value="K_trans"/>
    <property type="match status" value="1"/>
</dbReference>
<dbReference type="Pfam" id="PF22776">
    <property type="entry name" value="K_trans_C"/>
    <property type="match status" value="1"/>
</dbReference>
<sequence length="632" mass="69085">MTQSTTSHYFVESPSTRALVLGAVGVVFGDIGTSPLYALKECFSKEHGIMFSPEAVLGVISMLFWAMIIVVSIKYVVFVMRADNDGEGGVLALMALVLRTVAPRSGRARVLMMLGIFGACMFYGDAVITPAISVLSAVEGLEIAAPQLSQFVIPITLMILAALFLIQRHGTATMGKLFGPIMTAWFLALGGLGILHLVQAPEILKAINPYYAITFLVEHALQAFIVLGSVFLVLTGAEALYVDMGHFGARPIRIGWFVLVMPCLMLNYFGQGAMLLHNPAGAENPFYLMVPDLLQIPMVLLATCATVIASQAVISGAFSLTSQAIQLGFLPRMRVRYTSAAEIGQIYLPVINWLLLVLVIGVVISFKKSENLAAAYGIAVTTTMVITTILAAVCMRSVWKWNPALVAVVGLAFIVVDLSFFAANLLKVAEGGWFPLLLGSAAFFLLMTWYSGRKLLRARSLEDGIPLEPFIAGLLAHPPHRVEGTAVFLTGNTESVPVSLLHNLKHNRVLHERVVFLTFVTRDIPYVDDDHRLSCKDVGGGVFILKSEYGFKETPDVQRVLDLADRKLGMHFELMETSFFIARESVIPSKLPGMPMWRESLFAWMHQNGAKPSDFFQIPANRVVELGTKVEI</sequence>
<gene>
    <name evidence="1" type="primary">kup1</name>
    <name type="ordered locus">H16_A1419</name>
</gene>
<keyword id="KW-0997">Cell inner membrane</keyword>
<keyword id="KW-1003">Cell membrane</keyword>
<keyword id="KW-0406">Ion transport</keyword>
<keyword id="KW-0472">Membrane</keyword>
<keyword id="KW-0630">Potassium</keyword>
<keyword id="KW-0633">Potassium transport</keyword>
<keyword id="KW-1185">Reference proteome</keyword>
<keyword id="KW-0769">Symport</keyword>
<keyword id="KW-0812">Transmembrane</keyword>
<keyword id="KW-1133">Transmembrane helix</keyword>
<keyword id="KW-0813">Transport</keyword>
<organism>
    <name type="scientific">Cupriavidus necator (strain ATCC 17699 / DSM 428 / KCTC 22496 / NCIMB 10442 / H16 / Stanier 337)</name>
    <name type="common">Ralstonia eutropha</name>
    <dbReference type="NCBI Taxonomy" id="381666"/>
    <lineage>
        <taxon>Bacteria</taxon>
        <taxon>Pseudomonadati</taxon>
        <taxon>Pseudomonadota</taxon>
        <taxon>Betaproteobacteria</taxon>
        <taxon>Burkholderiales</taxon>
        <taxon>Burkholderiaceae</taxon>
        <taxon>Cupriavidus</taxon>
    </lineage>
</organism>
<feature type="chain" id="PRO_0000279814" description="Probable potassium transport system protein Kup 1">
    <location>
        <begin position="1"/>
        <end position="632"/>
    </location>
</feature>
<feature type="transmembrane region" description="Helical" evidence="1">
    <location>
        <begin position="19"/>
        <end position="39"/>
    </location>
</feature>
<feature type="transmembrane region" description="Helical" evidence="1">
    <location>
        <begin position="59"/>
        <end position="79"/>
    </location>
</feature>
<feature type="transmembrane region" description="Helical" evidence="1">
    <location>
        <begin position="110"/>
        <end position="130"/>
    </location>
</feature>
<feature type="transmembrane region" description="Helical" evidence="1">
    <location>
        <begin position="146"/>
        <end position="166"/>
    </location>
</feature>
<feature type="transmembrane region" description="Helical" evidence="1">
    <location>
        <begin position="178"/>
        <end position="198"/>
    </location>
</feature>
<feature type="transmembrane region" description="Helical" evidence="1">
    <location>
        <begin position="213"/>
        <end position="233"/>
    </location>
</feature>
<feature type="transmembrane region" description="Helical" evidence="1">
    <location>
        <begin position="256"/>
        <end position="276"/>
    </location>
</feature>
<feature type="transmembrane region" description="Helical" evidence="1">
    <location>
        <begin position="298"/>
        <end position="318"/>
    </location>
</feature>
<feature type="transmembrane region" description="Helical" evidence="1">
    <location>
        <begin position="346"/>
        <end position="366"/>
    </location>
</feature>
<feature type="transmembrane region" description="Helical" evidence="1">
    <location>
        <begin position="373"/>
        <end position="393"/>
    </location>
</feature>
<feature type="transmembrane region" description="Helical" evidence="1">
    <location>
        <begin position="403"/>
        <end position="423"/>
    </location>
</feature>
<feature type="transmembrane region" description="Helical" evidence="1">
    <location>
        <begin position="428"/>
        <end position="448"/>
    </location>
</feature>
<proteinExistence type="inferred from homology"/>